<name>BETI_YERPE</name>
<feature type="chain" id="PRO_0000070591" description="HTH-type transcriptional regulator BetI">
    <location>
        <begin position="1"/>
        <end position="198"/>
    </location>
</feature>
<feature type="domain" description="HTH tetR-type" evidence="2">
    <location>
        <begin position="8"/>
        <end position="68"/>
    </location>
</feature>
<feature type="DNA-binding region" description="H-T-H motif" evidence="2">
    <location>
        <begin position="31"/>
        <end position="50"/>
    </location>
</feature>
<evidence type="ECO:0000250" key="1"/>
<evidence type="ECO:0000255" key="2">
    <source>
        <dbReference type="HAMAP-Rule" id="MF_00768"/>
    </source>
</evidence>
<evidence type="ECO:0000305" key="3"/>
<protein>
    <recommendedName>
        <fullName evidence="2">HTH-type transcriptional regulator BetI</fullName>
    </recommendedName>
</protein>
<accession>Q8ZGV8</accession>
<accession>Q0WHN2</accession>
<dbReference type="EMBL" id="AL590842">
    <property type="protein sequence ID" value="CAL19831.1"/>
    <property type="molecule type" value="Genomic_DNA"/>
</dbReference>
<dbReference type="EMBL" id="AE017042">
    <property type="protein sequence ID" value="AAS61243.1"/>
    <property type="status" value="ALT_INIT"/>
    <property type="molecule type" value="Genomic_DNA"/>
</dbReference>
<dbReference type="PIR" id="AE0143">
    <property type="entry name" value="AE0143"/>
</dbReference>
<dbReference type="RefSeq" id="WP_002218278.1">
    <property type="nucleotide sequence ID" value="NZ_WHLN01000108.1"/>
</dbReference>
<dbReference type="RefSeq" id="YP_002346206.1">
    <property type="nucleotide sequence ID" value="NC_003143.1"/>
</dbReference>
<dbReference type="SMR" id="Q8ZGV8"/>
<dbReference type="STRING" id="214092.YPO1167"/>
<dbReference type="PaxDb" id="214092-YPO1167"/>
<dbReference type="EnsemblBacteria" id="AAS61243">
    <property type="protein sequence ID" value="AAS61243"/>
    <property type="gene ID" value="YP_0992"/>
</dbReference>
<dbReference type="GeneID" id="57977306"/>
<dbReference type="KEGG" id="ype:YPO1167"/>
<dbReference type="KEGG" id="ypm:YP_0992"/>
<dbReference type="PATRIC" id="fig|214092.21.peg.1464"/>
<dbReference type="eggNOG" id="COG1309">
    <property type="taxonomic scope" value="Bacteria"/>
</dbReference>
<dbReference type="HOGENOM" id="CLU_069356_15_4_6"/>
<dbReference type="OMA" id="ANDYIDL"/>
<dbReference type="OrthoDB" id="7618612at2"/>
<dbReference type="UniPathway" id="UPA00529"/>
<dbReference type="Proteomes" id="UP000000815">
    <property type="component" value="Chromosome"/>
</dbReference>
<dbReference type="Proteomes" id="UP000001019">
    <property type="component" value="Chromosome"/>
</dbReference>
<dbReference type="GO" id="GO:0003700">
    <property type="term" value="F:DNA-binding transcription factor activity"/>
    <property type="evidence" value="ECO:0000318"/>
    <property type="project" value="GO_Central"/>
</dbReference>
<dbReference type="GO" id="GO:0000976">
    <property type="term" value="F:transcription cis-regulatory region binding"/>
    <property type="evidence" value="ECO:0000318"/>
    <property type="project" value="GO_Central"/>
</dbReference>
<dbReference type="GO" id="GO:0019285">
    <property type="term" value="P:glycine betaine biosynthetic process from choline"/>
    <property type="evidence" value="ECO:0007669"/>
    <property type="project" value="UniProtKB-UniRule"/>
</dbReference>
<dbReference type="GO" id="GO:0045892">
    <property type="term" value="P:negative regulation of DNA-templated transcription"/>
    <property type="evidence" value="ECO:0007669"/>
    <property type="project" value="UniProtKB-UniRule"/>
</dbReference>
<dbReference type="GO" id="GO:0006355">
    <property type="term" value="P:regulation of DNA-templated transcription"/>
    <property type="evidence" value="ECO:0000318"/>
    <property type="project" value="GO_Central"/>
</dbReference>
<dbReference type="Gene3D" id="1.10.357.10">
    <property type="entry name" value="Tetracycline Repressor, domain 2"/>
    <property type="match status" value="1"/>
</dbReference>
<dbReference type="HAMAP" id="MF_00768">
    <property type="entry name" value="HTH_type_BetI"/>
    <property type="match status" value="1"/>
</dbReference>
<dbReference type="InterPro" id="IPR039538">
    <property type="entry name" value="BetI_C"/>
</dbReference>
<dbReference type="InterPro" id="IPR023772">
    <property type="entry name" value="DNA-bd_HTH_TetR-type_CS"/>
</dbReference>
<dbReference type="InterPro" id="IPR009057">
    <property type="entry name" value="Homeodomain-like_sf"/>
</dbReference>
<dbReference type="InterPro" id="IPR050109">
    <property type="entry name" value="HTH-type_TetR-like_transc_reg"/>
</dbReference>
<dbReference type="InterPro" id="IPR001647">
    <property type="entry name" value="HTH_TetR"/>
</dbReference>
<dbReference type="InterPro" id="IPR036271">
    <property type="entry name" value="Tet_transcr_reg_TetR-rel_C_sf"/>
</dbReference>
<dbReference type="InterPro" id="IPR017757">
    <property type="entry name" value="Tscrpt_rep_BetI"/>
</dbReference>
<dbReference type="NCBIfam" id="TIGR03384">
    <property type="entry name" value="betaine_BetI"/>
    <property type="match status" value="1"/>
</dbReference>
<dbReference type="NCBIfam" id="NF001978">
    <property type="entry name" value="PRK00767.1"/>
    <property type="match status" value="1"/>
</dbReference>
<dbReference type="PANTHER" id="PTHR30055:SF234">
    <property type="entry name" value="HTH-TYPE TRANSCRIPTIONAL REGULATOR BETI"/>
    <property type="match status" value="1"/>
</dbReference>
<dbReference type="PANTHER" id="PTHR30055">
    <property type="entry name" value="HTH-TYPE TRANSCRIPTIONAL REGULATOR RUTR"/>
    <property type="match status" value="1"/>
</dbReference>
<dbReference type="Pfam" id="PF13977">
    <property type="entry name" value="TetR_C_6"/>
    <property type="match status" value="1"/>
</dbReference>
<dbReference type="Pfam" id="PF00440">
    <property type="entry name" value="TetR_N"/>
    <property type="match status" value="1"/>
</dbReference>
<dbReference type="PRINTS" id="PR00455">
    <property type="entry name" value="HTHTETR"/>
</dbReference>
<dbReference type="SUPFAM" id="SSF46689">
    <property type="entry name" value="Homeodomain-like"/>
    <property type="match status" value="1"/>
</dbReference>
<dbReference type="SUPFAM" id="SSF48498">
    <property type="entry name" value="Tetracyclin repressor-like, C-terminal domain"/>
    <property type="match status" value="1"/>
</dbReference>
<dbReference type="PROSITE" id="PS01081">
    <property type="entry name" value="HTH_TETR_1"/>
    <property type="match status" value="1"/>
</dbReference>
<dbReference type="PROSITE" id="PS50977">
    <property type="entry name" value="HTH_TETR_2"/>
    <property type="match status" value="1"/>
</dbReference>
<gene>
    <name evidence="2" type="primary">betI</name>
    <name type="ordered locus">YPO1167</name>
    <name type="ordered locus">YP_0992</name>
</gene>
<organism>
    <name type="scientific">Yersinia pestis</name>
    <dbReference type="NCBI Taxonomy" id="632"/>
    <lineage>
        <taxon>Bacteria</taxon>
        <taxon>Pseudomonadati</taxon>
        <taxon>Pseudomonadota</taxon>
        <taxon>Gammaproteobacteria</taxon>
        <taxon>Enterobacterales</taxon>
        <taxon>Yersiniaceae</taxon>
        <taxon>Yersinia</taxon>
    </lineage>
</organism>
<keyword id="KW-0238">DNA-binding</keyword>
<keyword id="KW-1185">Reference proteome</keyword>
<keyword id="KW-0678">Repressor</keyword>
<keyword id="KW-0804">Transcription</keyword>
<keyword id="KW-0805">Transcription regulation</keyword>
<comment type="function">
    <text evidence="1">Repressor involved in the biosynthesis of the osmoprotectant glycine betaine. It represses transcription of the choline transporter BetT and the genes of BetAB involved in the synthesis of glycine betaine (By similarity).</text>
</comment>
<comment type="pathway">
    <text>Amine and polyamine biosynthesis; betaine biosynthesis via choline pathway [regulation].</text>
</comment>
<comment type="sequence caution" evidence="3">
    <conflict type="erroneous initiation">
        <sequence resource="EMBL-CDS" id="AAS61243"/>
    </conflict>
    <text>Extended N-terminus.</text>
</comment>
<reference key="1">
    <citation type="journal article" date="2001" name="Nature">
        <title>Genome sequence of Yersinia pestis, the causative agent of plague.</title>
        <authorList>
            <person name="Parkhill J."/>
            <person name="Wren B.W."/>
            <person name="Thomson N.R."/>
            <person name="Titball R.W."/>
            <person name="Holden M.T.G."/>
            <person name="Prentice M.B."/>
            <person name="Sebaihia M."/>
            <person name="James K.D."/>
            <person name="Churcher C.M."/>
            <person name="Mungall K.L."/>
            <person name="Baker S."/>
            <person name="Basham D."/>
            <person name="Bentley S.D."/>
            <person name="Brooks K."/>
            <person name="Cerdeno-Tarraga A.-M."/>
            <person name="Chillingworth T."/>
            <person name="Cronin A."/>
            <person name="Davies R.M."/>
            <person name="Davis P."/>
            <person name="Dougan G."/>
            <person name="Feltwell T."/>
            <person name="Hamlin N."/>
            <person name="Holroyd S."/>
            <person name="Jagels K."/>
            <person name="Karlyshev A.V."/>
            <person name="Leather S."/>
            <person name="Moule S."/>
            <person name="Oyston P.C.F."/>
            <person name="Quail M.A."/>
            <person name="Rutherford K.M."/>
            <person name="Simmonds M."/>
            <person name="Skelton J."/>
            <person name="Stevens K."/>
            <person name="Whitehead S."/>
            <person name="Barrell B.G."/>
        </authorList>
    </citation>
    <scope>NUCLEOTIDE SEQUENCE [LARGE SCALE GENOMIC DNA]</scope>
    <source>
        <strain>CO-92 / Biovar Orientalis</strain>
    </source>
</reference>
<reference key="2">
    <citation type="journal article" date="2004" name="DNA Res.">
        <title>Complete genome sequence of Yersinia pestis strain 91001, an isolate avirulent to humans.</title>
        <authorList>
            <person name="Song Y."/>
            <person name="Tong Z."/>
            <person name="Wang J."/>
            <person name="Wang L."/>
            <person name="Guo Z."/>
            <person name="Han Y."/>
            <person name="Zhang J."/>
            <person name="Pei D."/>
            <person name="Zhou D."/>
            <person name="Qin H."/>
            <person name="Pang X."/>
            <person name="Han Y."/>
            <person name="Zhai J."/>
            <person name="Li M."/>
            <person name="Cui B."/>
            <person name="Qi Z."/>
            <person name="Jin L."/>
            <person name="Dai R."/>
            <person name="Chen F."/>
            <person name="Li S."/>
            <person name="Ye C."/>
            <person name="Du Z."/>
            <person name="Lin W."/>
            <person name="Wang J."/>
            <person name="Yu J."/>
            <person name="Yang H."/>
            <person name="Wang J."/>
            <person name="Huang P."/>
            <person name="Yang R."/>
        </authorList>
    </citation>
    <scope>NUCLEOTIDE SEQUENCE [LARGE SCALE GENOMIC DNA]</scope>
    <source>
        <strain>91001 / Biovar Mediaevalis</strain>
    </source>
</reference>
<sequence length="198" mass="22428">MPKVGMQPIRRQQLIEATMAAVNEVGMHEASIAQIAKRAGVSNGIISHYFRDKNGLLEATMRYLIRHLGEAVKQHLAALSVNDPRARLRAIAEGNFDDSQINSAAMKTWLAFWASSMHSPQLYRLQQVNNRRLYSNLCAEFKRCLPREQAQLAAKGMAGLIDGLWLRSALSGEHFNRQEALLIIHNYIEQQLNIKYKC</sequence>
<proteinExistence type="inferred from homology"/>